<name>RS3_NITV2</name>
<evidence type="ECO:0000255" key="1">
    <source>
        <dbReference type="HAMAP-Rule" id="MF_01309"/>
    </source>
</evidence>
<evidence type="ECO:0000305" key="2"/>
<gene>
    <name evidence="1" type="primary">rpsC</name>
    <name type="ordered locus">DVU_1309</name>
</gene>
<feature type="chain" id="PRO_0000130112" description="Small ribosomal subunit protein uS3">
    <location>
        <begin position="1"/>
        <end position="212"/>
    </location>
</feature>
<feature type="domain" description="KH type-2" evidence="1">
    <location>
        <begin position="38"/>
        <end position="106"/>
    </location>
</feature>
<protein>
    <recommendedName>
        <fullName evidence="1">Small ribosomal subunit protein uS3</fullName>
    </recommendedName>
    <alternativeName>
        <fullName evidence="2">30S ribosomal protein S3</fullName>
    </alternativeName>
</protein>
<comment type="function">
    <text evidence="1">Binds the lower part of the 30S subunit head. Binds mRNA in the 70S ribosome, positioning it for translation.</text>
</comment>
<comment type="subunit">
    <text evidence="1">Part of the 30S ribosomal subunit. Forms a tight complex with proteins S10 and S14.</text>
</comment>
<comment type="similarity">
    <text evidence="1">Belongs to the universal ribosomal protein uS3 family.</text>
</comment>
<accession>Q72CH4</accession>
<organism>
    <name type="scientific">Nitratidesulfovibrio vulgaris (strain ATCC 29579 / DSM 644 / CCUG 34227 / NCIMB 8303 / VKM B-1760 / Hildenborough)</name>
    <name type="common">Desulfovibrio vulgaris</name>
    <dbReference type="NCBI Taxonomy" id="882"/>
    <lineage>
        <taxon>Bacteria</taxon>
        <taxon>Pseudomonadati</taxon>
        <taxon>Thermodesulfobacteriota</taxon>
        <taxon>Desulfovibrionia</taxon>
        <taxon>Desulfovibrionales</taxon>
        <taxon>Desulfovibrionaceae</taxon>
        <taxon>Nitratidesulfovibrio</taxon>
    </lineage>
</organism>
<sequence length="212" mass="24414">MGQKVHPFGFRLGYNKNWQSRWYSKKEYPAFVFEDHNIRKFVKKTLYHAGLAKIEIERAGGKVRLILSTARPGIVIGRKGVEIEKLRADLRKKFKREFAIEVNEIRRPEVESQLVAENIALQLERRVAFRRAMKRTVSMARKFGAEGIKVTCSGRLAGAEIARTEWYRDGRVPLQTLRADIDFGFAEARTTYGVIGVKVWIFKGELLDNEVA</sequence>
<proteinExistence type="inferred from homology"/>
<reference key="1">
    <citation type="journal article" date="2004" name="Nat. Biotechnol.">
        <title>The genome sequence of the anaerobic, sulfate-reducing bacterium Desulfovibrio vulgaris Hildenborough.</title>
        <authorList>
            <person name="Heidelberg J.F."/>
            <person name="Seshadri R."/>
            <person name="Haveman S.A."/>
            <person name="Hemme C.L."/>
            <person name="Paulsen I.T."/>
            <person name="Kolonay J.F."/>
            <person name="Eisen J.A."/>
            <person name="Ward N.L."/>
            <person name="Methe B.A."/>
            <person name="Brinkac L.M."/>
            <person name="Daugherty S.C."/>
            <person name="DeBoy R.T."/>
            <person name="Dodson R.J."/>
            <person name="Durkin A.S."/>
            <person name="Madupu R."/>
            <person name="Nelson W.C."/>
            <person name="Sullivan S.A."/>
            <person name="Fouts D.E."/>
            <person name="Haft D.H."/>
            <person name="Selengut J."/>
            <person name="Peterson J.D."/>
            <person name="Davidsen T.M."/>
            <person name="Zafar N."/>
            <person name="Zhou L."/>
            <person name="Radune D."/>
            <person name="Dimitrov G."/>
            <person name="Hance M."/>
            <person name="Tran K."/>
            <person name="Khouri H.M."/>
            <person name="Gill J."/>
            <person name="Utterback T.R."/>
            <person name="Feldblyum T.V."/>
            <person name="Wall J.D."/>
            <person name="Voordouw G."/>
            <person name="Fraser C.M."/>
        </authorList>
    </citation>
    <scope>NUCLEOTIDE SEQUENCE [LARGE SCALE GENOMIC DNA]</scope>
    <source>
        <strain>ATCC 29579 / DSM 644 / CCUG 34227 / NCIMB 8303 / VKM B-1760 / Hildenborough</strain>
    </source>
</reference>
<dbReference type="EMBL" id="AE017285">
    <property type="protein sequence ID" value="AAS95787.1"/>
    <property type="molecule type" value="Genomic_DNA"/>
</dbReference>
<dbReference type="RefSeq" id="WP_010938604.1">
    <property type="nucleotide sequence ID" value="NC_002937.3"/>
</dbReference>
<dbReference type="RefSeq" id="YP_010528.1">
    <property type="nucleotide sequence ID" value="NC_002937.3"/>
</dbReference>
<dbReference type="SMR" id="Q72CH4"/>
<dbReference type="STRING" id="882.DVU_1309"/>
<dbReference type="PaxDb" id="882-DVU_1309"/>
<dbReference type="EnsemblBacteria" id="AAS95787">
    <property type="protein sequence ID" value="AAS95787"/>
    <property type="gene ID" value="DVU_1309"/>
</dbReference>
<dbReference type="KEGG" id="dvu:DVU_1309"/>
<dbReference type="PATRIC" id="fig|882.5.peg.1221"/>
<dbReference type="eggNOG" id="COG0092">
    <property type="taxonomic scope" value="Bacteria"/>
</dbReference>
<dbReference type="HOGENOM" id="CLU_058591_0_2_7"/>
<dbReference type="OrthoDB" id="9806396at2"/>
<dbReference type="PhylomeDB" id="Q72CH4"/>
<dbReference type="Proteomes" id="UP000002194">
    <property type="component" value="Chromosome"/>
</dbReference>
<dbReference type="GO" id="GO:0022627">
    <property type="term" value="C:cytosolic small ribosomal subunit"/>
    <property type="evidence" value="ECO:0007669"/>
    <property type="project" value="TreeGrafter"/>
</dbReference>
<dbReference type="GO" id="GO:0003729">
    <property type="term" value="F:mRNA binding"/>
    <property type="evidence" value="ECO:0007669"/>
    <property type="project" value="UniProtKB-UniRule"/>
</dbReference>
<dbReference type="GO" id="GO:0019843">
    <property type="term" value="F:rRNA binding"/>
    <property type="evidence" value="ECO:0007669"/>
    <property type="project" value="UniProtKB-UniRule"/>
</dbReference>
<dbReference type="GO" id="GO:0003735">
    <property type="term" value="F:structural constituent of ribosome"/>
    <property type="evidence" value="ECO:0007669"/>
    <property type="project" value="InterPro"/>
</dbReference>
<dbReference type="GO" id="GO:0006412">
    <property type="term" value="P:translation"/>
    <property type="evidence" value="ECO:0007669"/>
    <property type="project" value="UniProtKB-UniRule"/>
</dbReference>
<dbReference type="CDD" id="cd02412">
    <property type="entry name" value="KH-II_30S_S3"/>
    <property type="match status" value="1"/>
</dbReference>
<dbReference type="FunFam" id="3.30.300.20:FF:000001">
    <property type="entry name" value="30S ribosomal protein S3"/>
    <property type="match status" value="1"/>
</dbReference>
<dbReference type="Gene3D" id="3.30.300.20">
    <property type="match status" value="1"/>
</dbReference>
<dbReference type="Gene3D" id="3.30.1140.32">
    <property type="entry name" value="Ribosomal protein S3, C-terminal domain"/>
    <property type="match status" value="1"/>
</dbReference>
<dbReference type="HAMAP" id="MF_01309_B">
    <property type="entry name" value="Ribosomal_uS3_B"/>
    <property type="match status" value="1"/>
</dbReference>
<dbReference type="InterPro" id="IPR004087">
    <property type="entry name" value="KH_dom"/>
</dbReference>
<dbReference type="InterPro" id="IPR015946">
    <property type="entry name" value="KH_dom-like_a/b"/>
</dbReference>
<dbReference type="InterPro" id="IPR004044">
    <property type="entry name" value="KH_dom_type_2"/>
</dbReference>
<dbReference type="InterPro" id="IPR009019">
    <property type="entry name" value="KH_sf_prok-type"/>
</dbReference>
<dbReference type="InterPro" id="IPR036419">
    <property type="entry name" value="Ribosomal_S3_C_sf"/>
</dbReference>
<dbReference type="InterPro" id="IPR005704">
    <property type="entry name" value="Ribosomal_uS3_bac-typ"/>
</dbReference>
<dbReference type="InterPro" id="IPR001351">
    <property type="entry name" value="Ribosomal_uS3_C"/>
</dbReference>
<dbReference type="InterPro" id="IPR018280">
    <property type="entry name" value="Ribosomal_uS3_CS"/>
</dbReference>
<dbReference type="NCBIfam" id="TIGR01009">
    <property type="entry name" value="rpsC_bact"/>
    <property type="match status" value="1"/>
</dbReference>
<dbReference type="PANTHER" id="PTHR11760">
    <property type="entry name" value="30S/40S RIBOSOMAL PROTEIN S3"/>
    <property type="match status" value="1"/>
</dbReference>
<dbReference type="PANTHER" id="PTHR11760:SF19">
    <property type="entry name" value="SMALL RIBOSOMAL SUBUNIT PROTEIN US3C"/>
    <property type="match status" value="1"/>
</dbReference>
<dbReference type="Pfam" id="PF07650">
    <property type="entry name" value="KH_2"/>
    <property type="match status" value="1"/>
</dbReference>
<dbReference type="Pfam" id="PF00189">
    <property type="entry name" value="Ribosomal_S3_C"/>
    <property type="match status" value="1"/>
</dbReference>
<dbReference type="SMART" id="SM00322">
    <property type="entry name" value="KH"/>
    <property type="match status" value="1"/>
</dbReference>
<dbReference type="SUPFAM" id="SSF54814">
    <property type="entry name" value="Prokaryotic type KH domain (KH-domain type II)"/>
    <property type="match status" value="1"/>
</dbReference>
<dbReference type="SUPFAM" id="SSF54821">
    <property type="entry name" value="Ribosomal protein S3 C-terminal domain"/>
    <property type="match status" value="1"/>
</dbReference>
<dbReference type="PROSITE" id="PS50823">
    <property type="entry name" value="KH_TYPE_2"/>
    <property type="match status" value="1"/>
</dbReference>
<dbReference type="PROSITE" id="PS00548">
    <property type="entry name" value="RIBOSOMAL_S3"/>
    <property type="match status" value="1"/>
</dbReference>
<keyword id="KW-1185">Reference proteome</keyword>
<keyword id="KW-0687">Ribonucleoprotein</keyword>
<keyword id="KW-0689">Ribosomal protein</keyword>
<keyword id="KW-0694">RNA-binding</keyword>
<keyword id="KW-0699">rRNA-binding</keyword>